<feature type="chain" id="PRO_1000045234" description="5-oxoprolinase subunit A">
    <location>
        <begin position="1"/>
        <end position="245"/>
    </location>
</feature>
<keyword id="KW-0067">ATP-binding</keyword>
<keyword id="KW-0378">Hydrolase</keyword>
<keyword id="KW-0547">Nucleotide-binding</keyword>
<proteinExistence type="inferred from homology"/>
<sequence>MKIDLNADLGEGCANDQALLQLVSSANIACGFHAGDAQTMRQSVRWALEYGVAIGAHPSFPDRENFGRTAMQLPPETVYAQVVYQLGALAAIVQVEGGVMQHVKPHGMLYNQAAVDPLLADAIAQAVKAVDPSLRLVGLAGSELIRAGTRVGLVTRQEVFADRHYQPDGTLVPRSQPDALIESDELALSQTLAMVQQHQVQACDGSWVQVQADTVCVHGDGVQALAFARCLRDRFQQEGISVIAQ</sequence>
<comment type="function">
    <text evidence="1">Catalyzes the cleavage of 5-oxoproline to form L-glutamate coupled to the hydrolysis of ATP to ADP and inorganic phosphate.</text>
</comment>
<comment type="catalytic activity">
    <reaction evidence="1">
        <text>5-oxo-L-proline + ATP + 2 H2O = L-glutamate + ADP + phosphate + H(+)</text>
        <dbReference type="Rhea" id="RHEA:10348"/>
        <dbReference type="ChEBI" id="CHEBI:15377"/>
        <dbReference type="ChEBI" id="CHEBI:15378"/>
        <dbReference type="ChEBI" id="CHEBI:29985"/>
        <dbReference type="ChEBI" id="CHEBI:30616"/>
        <dbReference type="ChEBI" id="CHEBI:43474"/>
        <dbReference type="ChEBI" id="CHEBI:58402"/>
        <dbReference type="ChEBI" id="CHEBI:456216"/>
        <dbReference type="EC" id="3.5.2.9"/>
    </reaction>
</comment>
<comment type="subunit">
    <text evidence="1">Forms a complex composed of PxpA, PxpB and PxpC.</text>
</comment>
<comment type="similarity">
    <text evidence="1">Belongs to the LamB/PxpA family.</text>
</comment>
<accession>A4TKZ6</accession>
<name>PXPA_YERPP</name>
<gene>
    <name evidence="1" type="primary">pxpA</name>
    <name type="ordered locus">YPDSF_1571</name>
</gene>
<dbReference type="EC" id="3.5.2.9" evidence="1"/>
<dbReference type="EMBL" id="CP000668">
    <property type="protein sequence ID" value="ABP39958.1"/>
    <property type="molecule type" value="Genomic_DNA"/>
</dbReference>
<dbReference type="RefSeq" id="WP_002209659.1">
    <property type="nucleotide sequence ID" value="NZ_CP009715.1"/>
</dbReference>
<dbReference type="SMR" id="A4TKZ6"/>
<dbReference type="GeneID" id="57975991"/>
<dbReference type="KEGG" id="ypp:YPDSF_1571"/>
<dbReference type="PATRIC" id="fig|386656.14.peg.2199"/>
<dbReference type="GO" id="GO:0017168">
    <property type="term" value="F:5-oxoprolinase (ATP-hydrolyzing) activity"/>
    <property type="evidence" value="ECO:0007669"/>
    <property type="project" value="UniProtKB-UniRule"/>
</dbReference>
<dbReference type="GO" id="GO:0005524">
    <property type="term" value="F:ATP binding"/>
    <property type="evidence" value="ECO:0007669"/>
    <property type="project" value="UniProtKB-UniRule"/>
</dbReference>
<dbReference type="GO" id="GO:0005975">
    <property type="term" value="P:carbohydrate metabolic process"/>
    <property type="evidence" value="ECO:0007669"/>
    <property type="project" value="InterPro"/>
</dbReference>
<dbReference type="CDD" id="cd10800">
    <property type="entry name" value="LamB_YcsF_YbgL_like"/>
    <property type="match status" value="1"/>
</dbReference>
<dbReference type="Gene3D" id="3.20.20.370">
    <property type="entry name" value="Glycoside hydrolase/deacetylase"/>
    <property type="match status" value="1"/>
</dbReference>
<dbReference type="HAMAP" id="MF_00691">
    <property type="entry name" value="PxpA"/>
    <property type="match status" value="1"/>
</dbReference>
<dbReference type="InterPro" id="IPR011330">
    <property type="entry name" value="Glyco_hydro/deAcase_b/a-brl"/>
</dbReference>
<dbReference type="InterPro" id="IPR005501">
    <property type="entry name" value="LamB/YcsF/PxpA-like"/>
</dbReference>
<dbReference type="NCBIfam" id="NF003812">
    <property type="entry name" value="PRK05406.1-1"/>
    <property type="match status" value="1"/>
</dbReference>
<dbReference type="NCBIfam" id="NF003814">
    <property type="entry name" value="PRK05406.1-3"/>
    <property type="match status" value="1"/>
</dbReference>
<dbReference type="NCBIfam" id="NF003815">
    <property type="entry name" value="PRK05406.1-4"/>
    <property type="match status" value="1"/>
</dbReference>
<dbReference type="NCBIfam" id="NF003816">
    <property type="entry name" value="PRK05406.1-5"/>
    <property type="match status" value="1"/>
</dbReference>
<dbReference type="PANTHER" id="PTHR30292:SF0">
    <property type="entry name" value="5-OXOPROLINASE SUBUNIT A"/>
    <property type="match status" value="1"/>
</dbReference>
<dbReference type="PANTHER" id="PTHR30292">
    <property type="entry name" value="UNCHARACTERIZED PROTEIN YBGL-RELATED"/>
    <property type="match status" value="1"/>
</dbReference>
<dbReference type="Pfam" id="PF03746">
    <property type="entry name" value="LamB_YcsF"/>
    <property type="match status" value="1"/>
</dbReference>
<dbReference type="SUPFAM" id="SSF88713">
    <property type="entry name" value="Glycoside hydrolase/deacetylase"/>
    <property type="match status" value="1"/>
</dbReference>
<protein>
    <recommendedName>
        <fullName evidence="1">5-oxoprolinase subunit A</fullName>
        <shortName evidence="1">5-OPase subunit A</shortName>
        <ecNumber evidence="1">3.5.2.9</ecNumber>
    </recommendedName>
    <alternativeName>
        <fullName evidence="1">5-oxoprolinase (ATP-hydrolyzing) subunit A</fullName>
    </alternativeName>
</protein>
<evidence type="ECO:0000255" key="1">
    <source>
        <dbReference type="HAMAP-Rule" id="MF_00691"/>
    </source>
</evidence>
<reference key="1">
    <citation type="submission" date="2007-02" db="EMBL/GenBank/DDBJ databases">
        <title>Complete sequence of chromosome of Yersinia pestis Pestoides F.</title>
        <authorList>
            <consortium name="US DOE Joint Genome Institute"/>
            <person name="Copeland A."/>
            <person name="Lucas S."/>
            <person name="Lapidus A."/>
            <person name="Barry K."/>
            <person name="Detter J.C."/>
            <person name="Glavina del Rio T."/>
            <person name="Hammon N."/>
            <person name="Israni S."/>
            <person name="Dalin E."/>
            <person name="Tice H."/>
            <person name="Pitluck S."/>
            <person name="Di Bartolo G."/>
            <person name="Chain P."/>
            <person name="Malfatti S."/>
            <person name="Shin M."/>
            <person name="Vergez L."/>
            <person name="Schmutz J."/>
            <person name="Larimer F."/>
            <person name="Land M."/>
            <person name="Hauser L."/>
            <person name="Worsham P."/>
            <person name="Chu M."/>
            <person name="Bearden S."/>
            <person name="Garcia E."/>
            <person name="Richardson P."/>
        </authorList>
    </citation>
    <scope>NUCLEOTIDE SEQUENCE [LARGE SCALE GENOMIC DNA]</scope>
    <source>
        <strain>Pestoides F</strain>
    </source>
</reference>
<organism>
    <name type="scientific">Yersinia pestis (strain Pestoides F)</name>
    <dbReference type="NCBI Taxonomy" id="386656"/>
    <lineage>
        <taxon>Bacteria</taxon>
        <taxon>Pseudomonadati</taxon>
        <taxon>Pseudomonadota</taxon>
        <taxon>Gammaproteobacteria</taxon>
        <taxon>Enterobacterales</taxon>
        <taxon>Yersiniaceae</taxon>
        <taxon>Yersinia</taxon>
    </lineage>
</organism>